<evidence type="ECO:0000250" key="1"/>
<evidence type="ECO:0000305" key="2"/>
<name>RR15_CUSRE</name>
<feature type="chain" id="PRO_0000354253" description="Small ribosomal subunit protein uS15c">
    <location>
        <begin position="1"/>
        <end position="90"/>
    </location>
</feature>
<accession>A7M9B1</accession>
<protein>
    <recommendedName>
        <fullName evidence="2">Small ribosomal subunit protein uS15c</fullName>
    </recommendedName>
    <alternativeName>
        <fullName>30S ribosomal protein S15, plastid</fullName>
    </alternativeName>
</protein>
<comment type="subunit">
    <text evidence="1">Part of the 30S ribosomal subunit.</text>
</comment>
<comment type="subcellular location">
    <subcellularLocation>
        <location>Plastid</location>
    </subcellularLocation>
</comment>
<comment type="similarity">
    <text evidence="2">Belongs to the universal ribosomal protein uS15 family.</text>
</comment>
<comment type="caution">
    <text evidence="2">Young tissue from this organism is photosynthetic and contains some thylakoids, although the photosynthetic activity does not exceed the light compensation point.</text>
</comment>
<sequence>MVKNFSISVISKKENKENRGSIEFQILNFTKKIRRLTSHLKLHKKDFLSQKGLRKILGKRHRLLAYLSKKLKICYKDLIEKLEIRDTKTH</sequence>
<geneLocation type="plastid"/>
<reference key="1">
    <citation type="journal article" date="2007" name="BMC Plant Biol.">
        <title>Complete DNA sequences of the plastid genomes of two parasitic flowering plant species, Cuscuta reflexa and Cuscuta gronovii.</title>
        <authorList>
            <person name="Funk H.T."/>
            <person name="Berg S."/>
            <person name="Krupinska K."/>
            <person name="Maier U.-G."/>
            <person name="Krause K."/>
        </authorList>
    </citation>
    <scope>NUCLEOTIDE SEQUENCE [LARGE SCALE GENOMIC DNA]</scope>
</reference>
<proteinExistence type="inferred from homology"/>
<dbReference type="EMBL" id="AM711640">
    <property type="protein sequence ID" value="CAM98439.1"/>
    <property type="molecule type" value="Genomic_DNA"/>
</dbReference>
<dbReference type="RefSeq" id="YP_001430152.1">
    <property type="nucleotide sequence ID" value="NC_009766.1"/>
</dbReference>
<dbReference type="SMR" id="A7M9B1"/>
<dbReference type="GeneID" id="5536640"/>
<dbReference type="GO" id="GO:0009536">
    <property type="term" value="C:plastid"/>
    <property type="evidence" value="ECO:0007669"/>
    <property type="project" value="UniProtKB-SubCell"/>
</dbReference>
<dbReference type="GO" id="GO:1990904">
    <property type="term" value="C:ribonucleoprotein complex"/>
    <property type="evidence" value="ECO:0007669"/>
    <property type="project" value="UniProtKB-KW"/>
</dbReference>
<dbReference type="GO" id="GO:0005840">
    <property type="term" value="C:ribosome"/>
    <property type="evidence" value="ECO:0007669"/>
    <property type="project" value="UniProtKB-KW"/>
</dbReference>
<dbReference type="GO" id="GO:0003735">
    <property type="term" value="F:structural constituent of ribosome"/>
    <property type="evidence" value="ECO:0007669"/>
    <property type="project" value="InterPro"/>
</dbReference>
<dbReference type="GO" id="GO:0006412">
    <property type="term" value="P:translation"/>
    <property type="evidence" value="ECO:0007669"/>
    <property type="project" value="InterPro"/>
</dbReference>
<dbReference type="CDD" id="cd00353">
    <property type="entry name" value="Ribosomal_S15p_S13e"/>
    <property type="match status" value="1"/>
</dbReference>
<dbReference type="Gene3D" id="1.10.287.10">
    <property type="entry name" value="S15/NS1, RNA-binding"/>
    <property type="match status" value="1"/>
</dbReference>
<dbReference type="HAMAP" id="MF_01343_B">
    <property type="entry name" value="Ribosomal_uS15_B"/>
    <property type="match status" value="1"/>
</dbReference>
<dbReference type="InterPro" id="IPR000589">
    <property type="entry name" value="Ribosomal_uS15"/>
</dbReference>
<dbReference type="InterPro" id="IPR005290">
    <property type="entry name" value="Ribosomal_uS15_bac-type"/>
</dbReference>
<dbReference type="InterPro" id="IPR009068">
    <property type="entry name" value="uS15_NS1_RNA-bd_sf"/>
</dbReference>
<dbReference type="NCBIfam" id="TIGR00952">
    <property type="entry name" value="S15_bact"/>
    <property type="match status" value="1"/>
</dbReference>
<dbReference type="PANTHER" id="PTHR23321">
    <property type="entry name" value="RIBOSOMAL PROTEIN S15, BACTERIAL AND ORGANELLAR"/>
    <property type="match status" value="1"/>
</dbReference>
<dbReference type="PANTHER" id="PTHR23321:SF26">
    <property type="entry name" value="SMALL RIBOSOMAL SUBUNIT PROTEIN US15M"/>
    <property type="match status" value="1"/>
</dbReference>
<dbReference type="Pfam" id="PF00312">
    <property type="entry name" value="Ribosomal_S15"/>
    <property type="match status" value="1"/>
</dbReference>
<dbReference type="SMART" id="SM01387">
    <property type="entry name" value="Ribosomal_S15"/>
    <property type="match status" value="1"/>
</dbReference>
<dbReference type="SUPFAM" id="SSF47060">
    <property type="entry name" value="S15/NS1 RNA-binding domain"/>
    <property type="match status" value="1"/>
</dbReference>
<dbReference type="PROSITE" id="PS00362">
    <property type="entry name" value="RIBOSOMAL_S15"/>
    <property type="match status" value="1"/>
</dbReference>
<organism>
    <name type="scientific">Cuscuta reflexa</name>
    <name type="common">Southern Asian dodder</name>
    <dbReference type="NCBI Taxonomy" id="4129"/>
    <lineage>
        <taxon>Eukaryota</taxon>
        <taxon>Viridiplantae</taxon>
        <taxon>Streptophyta</taxon>
        <taxon>Embryophyta</taxon>
        <taxon>Tracheophyta</taxon>
        <taxon>Spermatophyta</taxon>
        <taxon>Magnoliopsida</taxon>
        <taxon>eudicotyledons</taxon>
        <taxon>Gunneridae</taxon>
        <taxon>Pentapetalae</taxon>
        <taxon>asterids</taxon>
        <taxon>lamiids</taxon>
        <taxon>Solanales</taxon>
        <taxon>Convolvulaceae</taxon>
        <taxon>Cuscuteae</taxon>
        <taxon>Cuscuta</taxon>
        <taxon>Cuscuta subgen. Monogynella</taxon>
    </lineage>
</organism>
<keyword id="KW-0934">Plastid</keyword>
<keyword id="KW-0687">Ribonucleoprotein</keyword>
<keyword id="KW-0689">Ribosomal protein</keyword>
<gene>
    <name type="primary">rps15</name>
</gene>